<protein>
    <recommendedName>
        <fullName evidence="1">ATP phosphoribosyltransferase</fullName>
        <shortName evidence="1">ATP-PRT</shortName>
        <shortName evidence="1">ATP-PRTase</shortName>
        <ecNumber evidence="1">2.4.2.17</ecNumber>
    </recommendedName>
</protein>
<evidence type="ECO:0000255" key="1">
    <source>
        <dbReference type="HAMAP-Rule" id="MF_00079"/>
    </source>
</evidence>
<keyword id="KW-0028">Amino-acid biosynthesis</keyword>
<keyword id="KW-0067">ATP-binding</keyword>
<keyword id="KW-0963">Cytoplasm</keyword>
<keyword id="KW-0328">Glycosyltransferase</keyword>
<keyword id="KW-0368">Histidine biosynthesis</keyword>
<keyword id="KW-0460">Magnesium</keyword>
<keyword id="KW-0479">Metal-binding</keyword>
<keyword id="KW-0547">Nucleotide-binding</keyword>
<keyword id="KW-0808">Transferase</keyword>
<feature type="chain" id="PRO_1000004522" description="ATP phosphoribosyltransferase">
    <location>
        <begin position="1"/>
        <end position="299"/>
    </location>
</feature>
<dbReference type="EC" id="2.4.2.17" evidence="1"/>
<dbReference type="EMBL" id="BX936398">
    <property type="protein sequence ID" value="CAH20801.1"/>
    <property type="molecule type" value="Genomic_DNA"/>
</dbReference>
<dbReference type="RefSeq" id="WP_002211896.1">
    <property type="nucleotide sequence ID" value="NZ_CP009712.1"/>
</dbReference>
<dbReference type="SMR" id="Q66C48"/>
<dbReference type="GeneID" id="96665168"/>
<dbReference type="KEGG" id="ypo:BZ17_953"/>
<dbReference type="KEGG" id="yps:YPTB1562"/>
<dbReference type="PATRIC" id="fig|273123.14.peg.1013"/>
<dbReference type="UniPathway" id="UPA00031">
    <property type="reaction ID" value="UER00006"/>
</dbReference>
<dbReference type="Proteomes" id="UP000001011">
    <property type="component" value="Chromosome"/>
</dbReference>
<dbReference type="GO" id="GO:0005737">
    <property type="term" value="C:cytoplasm"/>
    <property type="evidence" value="ECO:0007669"/>
    <property type="project" value="UniProtKB-SubCell"/>
</dbReference>
<dbReference type="GO" id="GO:0005524">
    <property type="term" value="F:ATP binding"/>
    <property type="evidence" value="ECO:0007669"/>
    <property type="project" value="UniProtKB-KW"/>
</dbReference>
<dbReference type="GO" id="GO:0003879">
    <property type="term" value="F:ATP phosphoribosyltransferase activity"/>
    <property type="evidence" value="ECO:0007669"/>
    <property type="project" value="UniProtKB-UniRule"/>
</dbReference>
<dbReference type="GO" id="GO:0000287">
    <property type="term" value="F:magnesium ion binding"/>
    <property type="evidence" value="ECO:0007669"/>
    <property type="project" value="UniProtKB-UniRule"/>
</dbReference>
<dbReference type="GO" id="GO:0000105">
    <property type="term" value="P:L-histidine biosynthetic process"/>
    <property type="evidence" value="ECO:0007669"/>
    <property type="project" value="UniProtKB-UniRule"/>
</dbReference>
<dbReference type="CDD" id="cd13592">
    <property type="entry name" value="PBP2_HisGL2"/>
    <property type="match status" value="1"/>
</dbReference>
<dbReference type="FunFam" id="3.30.70.120:FF:000002">
    <property type="entry name" value="ATP phosphoribosyltransferase"/>
    <property type="match status" value="1"/>
</dbReference>
<dbReference type="FunFam" id="3.40.190.10:FF:000008">
    <property type="entry name" value="ATP phosphoribosyltransferase"/>
    <property type="match status" value="1"/>
</dbReference>
<dbReference type="Gene3D" id="3.30.70.120">
    <property type="match status" value="1"/>
</dbReference>
<dbReference type="Gene3D" id="3.40.190.10">
    <property type="entry name" value="Periplasmic binding protein-like II"/>
    <property type="match status" value="2"/>
</dbReference>
<dbReference type="HAMAP" id="MF_00079">
    <property type="entry name" value="HisG_Long"/>
    <property type="match status" value="1"/>
</dbReference>
<dbReference type="InterPro" id="IPR020621">
    <property type="entry name" value="ATP-PRT_HisG_long"/>
</dbReference>
<dbReference type="InterPro" id="IPR013820">
    <property type="entry name" value="ATP_PRibTrfase_cat"/>
</dbReference>
<dbReference type="InterPro" id="IPR018198">
    <property type="entry name" value="ATP_PRibTrfase_CS"/>
</dbReference>
<dbReference type="InterPro" id="IPR001348">
    <property type="entry name" value="ATP_PRibTrfase_HisG"/>
</dbReference>
<dbReference type="InterPro" id="IPR013115">
    <property type="entry name" value="HisG_C"/>
</dbReference>
<dbReference type="InterPro" id="IPR011322">
    <property type="entry name" value="N-reg_PII-like_a/b"/>
</dbReference>
<dbReference type="InterPro" id="IPR015867">
    <property type="entry name" value="N-reg_PII/ATP_PRibTrfase_C"/>
</dbReference>
<dbReference type="NCBIfam" id="TIGR00070">
    <property type="entry name" value="hisG"/>
    <property type="match status" value="1"/>
</dbReference>
<dbReference type="NCBIfam" id="TIGR03455">
    <property type="entry name" value="HisG_C-term"/>
    <property type="match status" value="1"/>
</dbReference>
<dbReference type="PANTHER" id="PTHR21403:SF8">
    <property type="entry name" value="ATP PHOSPHORIBOSYLTRANSFERASE"/>
    <property type="match status" value="1"/>
</dbReference>
<dbReference type="PANTHER" id="PTHR21403">
    <property type="entry name" value="ATP PHOSPHORIBOSYLTRANSFERASE ATP-PRTASE"/>
    <property type="match status" value="1"/>
</dbReference>
<dbReference type="Pfam" id="PF01634">
    <property type="entry name" value="HisG"/>
    <property type="match status" value="1"/>
</dbReference>
<dbReference type="Pfam" id="PF08029">
    <property type="entry name" value="HisG_C"/>
    <property type="match status" value="1"/>
</dbReference>
<dbReference type="SUPFAM" id="SSF54913">
    <property type="entry name" value="GlnB-like"/>
    <property type="match status" value="1"/>
</dbReference>
<dbReference type="SUPFAM" id="SSF53850">
    <property type="entry name" value="Periplasmic binding protein-like II"/>
    <property type="match status" value="1"/>
</dbReference>
<dbReference type="PROSITE" id="PS01316">
    <property type="entry name" value="ATP_P_PHORIBOSYLTR"/>
    <property type="match status" value="1"/>
</dbReference>
<accession>Q66C48</accession>
<gene>
    <name evidence="1" type="primary">hisG</name>
    <name type="ordered locus">YPTB1562</name>
</gene>
<reference key="1">
    <citation type="journal article" date="2004" name="Proc. Natl. Acad. Sci. U.S.A.">
        <title>Insights into the evolution of Yersinia pestis through whole-genome comparison with Yersinia pseudotuberculosis.</title>
        <authorList>
            <person name="Chain P.S.G."/>
            <person name="Carniel E."/>
            <person name="Larimer F.W."/>
            <person name="Lamerdin J."/>
            <person name="Stoutland P.O."/>
            <person name="Regala W.M."/>
            <person name="Georgescu A.M."/>
            <person name="Vergez L.M."/>
            <person name="Land M.L."/>
            <person name="Motin V.L."/>
            <person name="Brubaker R.R."/>
            <person name="Fowler J."/>
            <person name="Hinnebusch J."/>
            <person name="Marceau M."/>
            <person name="Medigue C."/>
            <person name="Simonet M."/>
            <person name="Chenal-Francisque V."/>
            <person name="Souza B."/>
            <person name="Dacheux D."/>
            <person name="Elliott J.M."/>
            <person name="Derbise A."/>
            <person name="Hauser L.J."/>
            <person name="Garcia E."/>
        </authorList>
    </citation>
    <scope>NUCLEOTIDE SEQUENCE [LARGE SCALE GENOMIC DNA]</scope>
    <source>
        <strain>IP32953</strain>
    </source>
</reference>
<comment type="function">
    <text evidence="1">Catalyzes the condensation of ATP and 5-phosphoribose 1-diphosphate to form N'-(5'-phosphoribosyl)-ATP (PR-ATP). Has a crucial role in the pathway because the rate of histidine biosynthesis seems to be controlled primarily by regulation of HisG enzymatic activity.</text>
</comment>
<comment type="catalytic activity">
    <reaction evidence="1">
        <text>1-(5-phospho-beta-D-ribosyl)-ATP + diphosphate = 5-phospho-alpha-D-ribose 1-diphosphate + ATP</text>
        <dbReference type="Rhea" id="RHEA:18473"/>
        <dbReference type="ChEBI" id="CHEBI:30616"/>
        <dbReference type="ChEBI" id="CHEBI:33019"/>
        <dbReference type="ChEBI" id="CHEBI:58017"/>
        <dbReference type="ChEBI" id="CHEBI:73183"/>
        <dbReference type="EC" id="2.4.2.17"/>
    </reaction>
</comment>
<comment type="cofactor">
    <cofactor evidence="1">
        <name>Mg(2+)</name>
        <dbReference type="ChEBI" id="CHEBI:18420"/>
    </cofactor>
</comment>
<comment type="activity regulation">
    <text evidence="1">Feedback inhibited by histidine.</text>
</comment>
<comment type="pathway">
    <text evidence="1">Amino-acid biosynthesis; L-histidine biosynthesis; L-histidine from 5-phospho-alpha-D-ribose 1-diphosphate: step 1/9.</text>
</comment>
<comment type="subunit">
    <text evidence="1">Equilibrium between an active dimeric form, an inactive hexameric form and higher aggregates. Interconversion between the various forms is largely reversible and is influenced by the natural substrates and inhibitors of the enzyme.</text>
</comment>
<comment type="subcellular location">
    <subcellularLocation>
        <location evidence="1">Cytoplasm</location>
    </subcellularLocation>
</comment>
<comment type="similarity">
    <text evidence="1">Belongs to the ATP phosphoribosyltransferase family. Long subfamily.</text>
</comment>
<organism>
    <name type="scientific">Yersinia pseudotuberculosis serotype I (strain IP32953)</name>
    <dbReference type="NCBI Taxonomy" id="273123"/>
    <lineage>
        <taxon>Bacteria</taxon>
        <taxon>Pseudomonadati</taxon>
        <taxon>Pseudomonadota</taxon>
        <taxon>Gammaproteobacteria</taxon>
        <taxon>Enterobacterales</taxon>
        <taxon>Yersiniaceae</taxon>
        <taxon>Yersinia</taxon>
    </lineage>
</organism>
<proteinExistence type="inferred from homology"/>
<sequence length="299" mass="33456">MLDKTRLRIAMQKSGRLSDESQELLSRCGIKINLQQQRLIAFAENMPIDILRVRDDDIPGLVMDGVVDLGIIGENVLEEELLNRRAQGDDPRYFTLRRLDFGGCRLSLAAPLDAEYTGPQCLQDTRIATSYPHILKQYLDKQGVRFKSCLLNGSVEVAPRAGLADAICDLVSTGATLEANGLREVEVIYRSKACLIQRDGEMSVDKQQLIDRLMTRIQGVIQARESKYIMMHAPSERLDEIITLLPGAERPTILPLAGDKSRVAMHMVSSETLFWETMEKLKALGASSILVLPIEKMME</sequence>
<name>HIS1_YERPS</name>